<accession>Q5R9Y3</accession>
<name>ABT1_PONAB</name>
<evidence type="ECO:0000250" key="1"/>
<evidence type="ECO:0000250" key="2">
    <source>
        <dbReference type="UniProtKB" id="Q9ULW3"/>
    </source>
</evidence>
<evidence type="ECO:0000255" key="3"/>
<evidence type="ECO:0000256" key="4">
    <source>
        <dbReference type="SAM" id="MobiDB-lite"/>
    </source>
</evidence>
<evidence type="ECO:0000305" key="5"/>
<protein>
    <recommendedName>
        <fullName>Activator of basal transcription 1</fullName>
    </recommendedName>
</protein>
<keyword id="KW-0007">Acetylation</keyword>
<keyword id="KW-0175">Coiled coil</keyword>
<keyword id="KW-0238">DNA-binding</keyword>
<keyword id="KW-0539">Nucleus</keyword>
<keyword id="KW-1185">Reference proteome</keyword>
<keyword id="KW-0694">RNA-binding</keyword>
<keyword id="KW-0804">Transcription</keyword>
<keyword id="KW-0805">Transcription regulation</keyword>
<dbReference type="EMBL" id="CR859247">
    <property type="protein sequence ID" value="CAH91427.1"/>
    <property type="molecule type" value="mRNA"/>
</dbReference>
<dbReference type="RefSeq" id="NP_001125836.1">
    <property type="nucleotide sequence ID" value="NM_001132364.1"/>
</dbReference>
<dbReference type="FunCoup" id="Q5R9Y3">
    <property type="interactions" value="3348"/>
</dbReference>
<dbReference type="STRING" id="9601.ENSPPYP00000018265"/>
<dbReference type="GeneID" id="100172765"/>
<dbReference type="KEGG" id="pon:100172765"/>
<dbReference type="CTD" id="29777"/>
<dbReference type="eggNOG" id="KOG3152">
    <property type="taxonomic scope" value="Eukaryota"/>
</dbReference>
<dbReference type="InParanoid" id="Q5R9Y3"/>
<dbReference type="OrthoDB" id="287393at2759"/>
<dbReference type="Proteomes" id="UP000001595">
    <property type="component" value="Unplaced"/>
</dbReference>
<dbReference type="GO" id="GO:0005730">
    <property type="term" value="C:nucleolus"/>
    <property type="evidence" value="ECO:0007669"/>
    <property type="project" value="UniProtKB-SubCell"/>
</dbReference>
<dbReference type="GO" id="GO:0003677">
    <property type="term" value="F:DNA binding"/>
    <property type="evidence" value="ECO:0007669"/>
    <property type="project" value="UniProtKB-KW"/>
</dbReference>
<dbReference type="GO" id="GO:0003723">
    <property type="term" value="F:RNA binding"/>
    <property type="evidence" value="ECO:0007669"/>
    <property type="project" value="UniProtKB-KW"/>
</dbReference>
<dbReference type="GO" id="GO:0000480">
    <property type="term" value="P:endonucleolytic cleavage in 5'-ETS of tricistronic rRNA transcript (SSU-rRNA, 5.8S rRNA, LSU-rRNA)"/>
    <property type="evidence" value="ECO:0007669"/>
    <property type="project" value="TreeGrafter"/>
</dbReference>
<dbReference type="GO" id="GO:0000447">
    <property type="term" value="P:endonucleolytic cleavage in ITS1 to separate SSU-rRNA from 5.8S rRNA and LSU-rRNA from tricistronic rRNA transcript (SSU-rRNA, 5.8S rRNA, LSU-rRNA)"/>
    <property type="evidence" value="ECO:0007669"/>
    <property type="project" value="TreeGrafter"/>
</dbReference>
<dbReference type="GO" id="GO:0000472">
    <property type="term" value="P:endonucleolytic cleavage to generate mature 5'-end of SSU-rRNA from (SSU-rRNA, 5.8S rRNA, LSU-rRNA)"/>
    <property type="evidence" value="ECO:0007669"/>
    <property type="project" value="TreeGrafter"/>
</dbReference>
<dbReference type="GO" id="GO:0034462">
    <property type="term" value="P:small-subunit processome assembly"/>
    <property type="evidence" value="ECO:0007669"/>
    <property type="project" value="TreeGrafter"/>
</dbReference>
<dbReference type="CDD" id="cd12263">
    <property type="entry name" value="RRM_ABT1_like"/>
    <property type="match status" value="1"/>
</dbReference>
<dbReference type="FunFam" id="3.30.70.330:FF:000447">
    <property type="entry name" value="Activator of basal transcription 1"/>
    <property type="match status" value="1"/>
</dbReference>
<dbReference type="Gene3D" id="3.30.70.330">
    <property type="match status" value="1"/>
</dbReference>
<dbReference type="InterPro" id="IPR039119">
    <property type="entry name" value="ABT1/Esf2"/>
</dbReference>
<dbReference type="InterPro" id="IPR034353">
    <property type="entry name" value="ABT1/ESF2_RRM"/>
</dbReference>
<dbReference type="InterPro" id="IPR012677">
    <property type="entry name" value="Nucleotide-bd_a/b_plait_sf"/>
</dbReference>
<dbReference type="InterPro" id="IPR035979">
    <property type="entry name" value="RBD_domain_sf"/>
</dbReference>
<dbReference type="PANTHER" id="PTHR12311">
    <property type="entry name" value="ACTIVATOR OF BASAL TRANSCRIPTION 1"/>
    <property type="match status" value="1"/>
</dbReference>
<dbReference type="PANTHER" id="PTHR12311:SF7">
    <property type="entry name" value="ACTIVATOR OF BASAL TRANSCRIPTION 1"/>
    <property type="match status" value="1"/>
</dbReference>
<dbReference type="SUPFAM" id="SSF54928">
    <property type="entry name" value="RNA-binding domain, RBD"/>
    <property type="match status" value="1"/>
</dbReference>
<reference key="1">
    <citation type="submission" date="2004-11" db="EMBL/GenBank/DDBJ databases">
        <authorList>
            <consortium name="The German cDNA consortium"/>
        </authorList>
    </citation>
    <scope>NUCLEOTIDE SEQUENCE [LARGE SCALE MRNA]</scope>
    <source>
        <tissue>Kidney</tissue>
    </source>
</reference>
<proteinExistence type="evidence at transcript level"/>
<organism>
    <name type="scientific">Pongo abelii</name>
    <name type="common">Sumatran orangutan</name>
    <name type="synonym">Pongo pygmaeus abelii</name>
    <dbReference type="NCBI Taxonomy" id="9601"/>
    <lineage>
        <taxon>Eukaryota</taxon>
        <taxon>Metazoa</taxon>
        <taxon>Chordata</taxon>
        <taxon>Craniata</taxon>
        <taxon>Vertebrata</taxon>
        <taxon>Euteleostomi</taxon>
        <taxon>Mammalia</taxon>
        <taxon>Eutheria</taxon>
        <taxon>Euarchontoglires</taxon>
        <taxon>Primates</taxon>
        <taxon>Haplorrhini</taxon>
        <taxon>Catarrhini</taxon>
        <taxon>Hominidae</taxon>
        <taxon>Pongo</taxon>
    </lineage>
</organism>
<gene>
    <name type="primary">ABT1</name>
</gene>
<sequence>MEAEESEKAATEQEPLKGTEQTLDAEEEQEESEDAACGSKKRVVPGIVYLGHIPPRFRPLHVRNLLSAYGEVGRVFFQAEDRFVRRKKKAAAAAGGKKRSYSKDYTEGWVEFRDKRIAKRVAASLHNTPMGARRRSPFRYDLWNLKYLHRFTWSHLSEHLAFERQVRRQRLRAEVAQAKRETDFYLQSVERGQRFLAADGDPARPDGSWTFAQRPTEQELRAQKAARPGGRERARLVTAQDKARSNKGLLARIFGAPPPSESMEGPSLVRDS</sequence>
<feature type="chain" id="PRO_0000233170" description="Activator of basal transcription 1">
    <location>
        <begin position="1"/>
        <end position="272"/>
    </location>
</feature>
<feature type="domain" description="RRM">
    <location>
        <begin position="46"/>
        <end position="142"/>
    </location>
</feature>
<feature type="region of interest" description="Disordered" evidence="4">
    <location>
        <begin position="1"/>
        <end position="38"/>
    </location>
</feature>
<feature type="region of interest" description="Disordered" evidence="4">
    <location>
        <begin position="197"/>
        <end position="272"/>
    </location>
</feature>
<feature type="coiled-coil region" evidence="3">
    <location>
        <begin position="161"/>
        <end position="191"/>
    </location>
</feature>
<feature type="compositionally biased region" description="Basic and acidic residues" evidence="4">
    <location>
        <begin position="1"/>
        <end position="17"/>
    </location>
</feature>
<feature type="compositionally biased region" description="Acidic residues" evidence="4">
    <location>
        <begin position="23"/>
        <end position="34"/>
    </location>
</feature>
<feature type="modified residue" description="N-acetylmethionine" evidence="2">
    <location>
        <position position="1"/>
    </location>
</feature>
<comment type="function">
    <text evidence="1">Could be a novel TATA-binding protein (TBP) which can function as a basal transcription activator. Can act as a regulator of basal transcription for class II genes (By similarity).</text>
</comment>
<comment type="subunit">
    <text evidence="1">Interacts with ESF1/ABTAP. Interacts with IGHMBP2.</text>
</comment>
<comment type="subcellular location">
    <subcellularLocation>
        <location evidence="1">Nucleus</location>
    </subcellularLocation>
    <subcellularLocation>
        <location evidence="1">Nucleus</location>
        <location evidence="1">Nucleolus</location>
    </subcellularLocation>
</comment>
<comment type="similarity">
    <text evidence="5">Belongs to the ESF2/ABP1 family.</text>
</comment>